<dbReference type="EMBL" id="D32007">
    <property type="protein sequence ID" value="BAA06774.1"/>
    <property type="molecule type" value="mRNA"/>
</dbReference>
<dbReference type="CCDS" id="CCDS17978.1"/>
<dbReference type="RefSeq" id="NP_033952.1">
    <property type="nucleotide sequence ID" value="NM_009822.3"/>
</dbReference>
<dbReference type="BMRB" id="Q61909"/>
<dbReference type="SMR" id="Q61909"/>
<dbReference type="BioGRID" id="198520">
    <property type="interactions" value="7"/>
</dbReference>
<dbReference type="FunCoup" id="Q61909">
    <property type="interactions" value="2586"/>
</dbReference>
<dbReference type="IntAct" id="Q61909">
    <property type="interactions" value="9"/>
</dbReference>
<dbReference type="MINT" id="Q61909"/>
<dbReference type="STRING" id="10090.ENSMUSP00000127109"/>
<dbReference type="GlyGen" id="Q61909">
    <property type="glycosylation" value="3 sites"/>
</dbReference>
<dbReference type="iPTMnet" id="Q61909"/>
<dbReference type="PhosphoSitePlus" id="Q61909"/>
<dbReference type="SwissPalm" id="Q61909"/>
<dbReference type="PaxDb" id="10090-ENSMUSP00000006761"/>
<dbReference type="ProteomicsDB" id="286073"/>
<dbReference type="Pumba" id="Q61909"/>
<dbReference type="Antibodypedia" id="25672">
    <property type="antibodies" value="272 antibodies from 34 providers"/>
</dbReference>
<dbReference type="DNASU" id="12395"/>
<dbReference type="Ensembl" id="ENSMUST00000098256.4">
    <property type="protein sequence ID" value="ENSMUSP00000095856.4"/>
    <property type="gene ID" value="ENSMUSG00000006586.16"/>
</dbReference>
<dbReference type="GeneID" id="12395"/>
<dbReference type="KEGG" id="mmu:12395"/>
<dbReference type="UCSC" id="uc008sax.3">
    <property type="organism name" value="mouse"/>
</dbReference>
<dbReference type="AGR" id="MGI:104793"/>
<dbReference type="CTD" id="862"/>
<dbReference type="MGI" id="MGI:104793">
    <property type="gene designation" value="Runx1t1"/>
</dbReference>
<dbReference type="VEuPathDB" id="HostDB:ENSMUSG00000006586"/>
<dbReference type="eggNOG" id="ENOG502QTD6">
    <property type="taxonomic scope" value="Eukaryota"/>
</dbReference>
<dbReference type="GeneTree" id="ENSGT00950000183176"/>
<dbReference type="HOGENOM" id="CLU_022077_2_0_1"/>
<dbReference type="InParanoid" id="Q61909"/>
<dbReference type="OMA" id="HDMIATE"/>
<dbReference type="OrthoDB" id="8872930at2759"/>
<dbReference type="BioGRID-ORCS" id="12395">
    <property type="hits" value="0 hits in 80 CRISPR screens"/>
</dbReference>
<dbReference type="ChiTaRS" id="Runx1t1">
    <property type="organism name" value="mouse"/>
</dbReference>
<dbReference type="PRO" id="PR:Q61909"/>
<dbReference type="Proteomes" id="UP000000589">
    <property type="component" value="Chromosome 4"/>
</dbReference>
<dbReference type="RNAct" id="Q61909">
    <property type="molecule type" value="protein"/>
</dbReference>
<dbReference type="Bgee" id="ENSMUSG00000006586">
    <property type="expression patterns" value="Expressed in rostral migratory stream and 240 other cell types or tissues"/>
</dbReference>
<dbReference type="ExpressionAtlas" id="Q61909">
    <property type="expression patterns" value="baseline and differential"/>
</dbReference>
<dbReference type="GO" id="GO:0005634">
    <property type="term" value="C:nucleus"/>
    <property type="evidence" value="ECO:0000314"/>
    <property type="project" value="MGI"/>
</dbReference>
<dbReference type="GO" id="GO:0017053">
    <property type="term" value="C:transcription repressor complex"/>
    <property type="evidence" value="ECO:0000250"/>
    <property type="project" value="UniProtKB"/>
</dbReference>
<dbReference type="GO" id="GO:0042802">
    <property type="term" value="F:identical protein binding"/>
    <property type="evidence" value="ECO:0000353"/>
    <property type="project" value="MGI"/>
</dbReference>
<dbReference type="GO" id="GO:0003714">
    <property type="term" value="F:transcription corepressor activity"/>
    <property type="evidence" value="ECO:0007669"/>
    <property type="project" value="InterPro"/>
</dbReference>
<dbReference type="GO" id="GO:0008270">
    <property type="term" value="F:zinc ion binding"/>
    <property type="evidence" value="ECO:0007669"/>
    <property type="project" value="UniProtKB-KW"/>
</dbReference>
<dbReference type="GO" id="GO:0006351">
    <property type="term" value="P:DNA-templated transcription"/>
    <property type="evidence" value="ECO:0007669"/>
    <property type="project" value="InterPro"/>
</dbReference>
<dbReference type="GO" id="GO:0045444">
    <property type="term" value="P:fat cell differentiation"/>
    <property type="evidence" value="ECO:0000314"/>
    <property type="project" value="MGI"/>
</dbReference>
<dbReference type="GO" id="GO:0045892">
    <property type="term" value="P:negative regulation of DNA-templated transcription"/>
    <property type="evidence" value="ECO:0000250"/>
    <property type="project" value="UniProtKB"/>
</dbReference>
<dbReference type="GO" id="GO:0045599">
    <property type="term" value="P:negative regulation of fat cell differentiation"/>
    <property type="evidence" value="ECO:0000315"/>
    <property type="project" value="UniProtKB"/>
</dbReference>
<dbReference type="GO" id="GO:0010977">
    <property type="term" value="P:negative regulation of neuron projection development"/>
    <property type="evidence" value="ECO:0000250"/>
    <property type="project" value="UniProtKB"/>
</dbReference>
<dbReference type="GO" id="GO:0006355">
    <property type="term" value="P:regulation of DNA-templated transcription"/>
    <property type="evidence" value="ECO:0000314"/>
    <property type="project" value="MGI"/>
</dbReference>
<dbReference type="FunFam" id="6.10.140.2220:FF:000001">
    <property type="entry name" value="CBFA2/RUNX1 translocation partner 3"/>
    <property type="match status" value="1"/>
</dbReference>
<dbReference type="FunFam" id="1.20.120.1110:FF:000001">
    <property type="entry name" value="RUNX1 translocation partner 1"/>
    <property type="match status" value="1"/>
</dbReference>
<dbReference type="Gene3D" id="6.10.140.2220">
    <property type="match status" value="1"/>
</dbReference>
<dbReference type="Gene3D" id="6.10.250.230">
    <property type="match status" value="1"/>
</dbReference>
<dbReference type="Gene3D" id="1.20.120.1110">
    <property type="entry name" value="TAFH/NHR1 domain"/>
    <property type="match status" value="1"/>
</dbReference>
<dbReference type="InterPro" id="IPR013290">
    <property type="entry name" value="CBFA2T1"/>
</dbReference>
<dbReference type="InterPro" id="IPR013289">
    <property type="entry name" value="CBFA2T1/2/3"/>
</dbReference>
<dbReference type="InterPro" id="IPR014896">
    <property type="entry name" value="NHR2"/>
</dbReference>
<dbReference type="InterPro" id="IPR037249">
    <property type="entry name" value="TAFH/NHR1_dom_sf"/>
</dbReference>
<dbReference type="InterPro" id="IPR003894">
    <property type="entry name" value="TAFH_NHR1"/>
</dbReference>
<dbReference type="InterPro" id="IPR002893">
    <property type="entry name" value="Znf_MYND"/>
</dbReference>
<dbReference type="PANTHER" id="PTHR10379">
    <property type="entry name" value="MTG8 ETO EIGHT TWENTY ONE PROTEIN"/>
    <property type="match status" value="1"/>
</dbReference>
<dbReference type="PANTHER" id="PTHR10379:SF5">
    <property type="entry name" value="PROTEIN CBFA2T1"/>
    <property type="match status" value="1"/>
</dbReference>
<dbReference type="Pfam" id="PF08788">
    <property type="entry name" value="NHR2"/>
    <property type="match status" value="1"/>
</dbReference>
<dbReference type="Pfam" id="PF07531">
    <property type="entry name" value="TAFH"/>
    <property type="match status" value="1"/>
</dbReference>
<dbReference type="Pfam" id="PF01753">
    <property type="entry name" value="zf-MYND"/>
    <property type="match status" value="1"/>
</dbReference>
<dbReference type="PRINTS" id="PR01875">
    <property type="entry name" value="ETOFAMILY"/>
</dbReference>
<dbReference type="PRINTS" id="PR01876">
    <property type="entry name" value="MTG8PROTEIN"/>
</dbReference>
<dbReference type="SMART" id="SM00549">
    <property type="entry name" value="TAFH"/>
    <property type="match status" value="1"/>
</dbReference>
<dbReference type="SUPFAM" id="SSF144232">
    <property type="entry name" value="HIT/MYND zinc finger-like"/>
    <property type="match status" value="1"/>
</dbReference>
<dbReference type="SUPFAM" id="SSF158553">
    <property type="entry name" value="TAFH domain-like"/>
    <property type="match status" value="1"/>
</dbReference>
<dbReference type="PROSITE" id="PS51119">
    <property type="entry name" value="TAFH"/>
    <property type="match status" value="1"/>
</dbReference>
<dbReference type="PROSITE" id="PS01360">
    <property type="entry name" value="ZF_MYND_1"/>
    <property type="match status" value="1"/>
</dbReference>
<dbReference type="PROSITE" id="PS50865">
    <property type="entry name" value="ZF_MYND_2"/>
    <property type="match status" value="1"/>
</dbReference>
<proteinExistence type="evidence at transcript level"/>
<keyword id="KW-0238">DNA-binding</keyword>
<keyword id="KW-0479">Metal-binding</keyword>
<keyword id="KW-0539">Nucleus</keyword>
<keyword id="KW-0597">Phosphoprotein</keyword>
<keyword id="KW-1185">Reference proteome</keyword>
<keyword id="KW-0678">Repressor</keyword>
<keyword id="KW-0804">Transcription</keyword>
<keyword id="KW-0805">Transcription regulation</keyword>
<keyword id="KW-0862">Zinc</keyword>
<keyword id="KW-0863">Zinc-finger</keyword>
<feature type="chain" id="PRO_0000218300" description="Protein CBFA2T1">
    <location>
        <begin position="1"/>
        <end position="577"/>
    </location>
</feature>
<feature type="domain" description="TAFH" evidence="4">
    <location>
        <begin position="93"/>
        <end position="188"/>
    </location>
</feature>
<feature type="zinc finger region" description="MYND-type" evidence="3">
    <location>
        <begin position="488"/>
        <end position="524"/>
    </location>
</feature>
<feature type="region of interest" description="Disordered" evidence="5">
    <location>
        <begin position="1"/>
        <end position="87"/>
    </location>
</feature>
<feature type="region of interest" description="Disordered" evidence="5">
    <location>
        <begin position="203"/>
        <end position="271"/>
    </location>
</feature>
<feature type="region of interest" description="Important for oligomerization" evidence="1">
    <location>
        <begin position="310"/>
        <end position="356"/>
    </location>
</feature>
<feature type="region of interest" description="Nervy homology region 2 (NHR2)" evidence="2">
    <location>
        <begin position="310"/>
        <end position="356"/>
    </location>
</feature>
<feature type="region of interest" description="Disordered" evidence="5">
    <location>
        <begin position="374"/>
        <end position="396"/>
    </location>
</feature>
<feature type="region of interest" description="Nervy homology region 3 (NHR3)" evidence="2">
    <location>
        <begin position="416"/>
        <end position="465"/>
    </location>
</feature>
<feature type="region of interest" description="Disordered" evidence="5">
    <location>
        <begin position="529"/>
        <end position="577"/>
    </location>
</feature>
<feature type="compositionally biased region" description="Basic and acidic residues" evidence="5">
    <location>
        <begin position="1"/>
        <end position="10"/>
    </location>
</feature>
<feature type="compositionally biased region" description="Polar residues" evidence="5">
    <location>
        <begin position="42"/>
        <end position="59"/>
    </location>
</feature>
<feature type="compositionally biased region" description="Low complexity" evidence="5">
    <location>
        <begin position="68"/>
        <end position="87"/>
    </location>
</feature>
<feature type="compositionally biased region" description="Basic and acidic residues" evidence="5">
    <location>
        <begin position="211"/>
        <end position="237"/>
    </location>
</feature>
<feature type="compositionally biased region" description="Polar residues" evidence="5">
    <location>
        <begin position="244"/>
        <end position="258"/>
    </location>
</feature>
<feature type="compositionally biased region" description="Pro residues" evidence="5">
    <location>
        <begin position="262"/>
        <end position="271"/>
    </location>
</feature>
<feature type="compositionally biased region" description="Low complexity" evidence="5">
    <location>
        <begin position="380"/>
        <end position="390"/>
    </location>
</feature>
<feature type="compositionally biased region" description="Low complexity" evidence="5">
    <location>
        <begin position="536"/>
        <end position="553"/>
    </location>
</feature>
<feature type="compositionally biased region" description="Low complexity" evidence="5">
    <location>
        <begin position="560"/>
        <end position="577"/>
    </location>
</feature>
<feature type="binding site" evidence="3">
    <location>
        <position position="488"/>
    </location>
    <ligand>
        <name>Zn(2+)</name>
        <dbReference type="ChEBI" id="CHEBI:29105"/>
        <label>1</label>
    </ligand>
</feature>
<feature type="binding site" evidence="3">
    <location>
        <position position="491"/>
    </location>
    <ligand>
        <name>Zn(2+)</name>
        <dbReference type="ChEBI" id="CHEBI:29105"/>
        <label>1</label>
    </ligand>
</feature>
<feature type="binding site" evidence="3">
    <location>
        <position position="499"/>
    </location>
    <ligand>
        <name>Zn(2+)</name>
        <dbReference type="ChEBI" id="CHEBI:29105"/>
        <label>2</label>
    </ligand>
</feature>
<feature type="binding site" evidence="3">
    <location>
        <position position="502"/>
    </location>
    <ligand>
        <name>Zn(2+)</name>
        <dbReference type="ChEBI" id="CHEBI:29105"/>
        <label>2</label>
    </ligand>
</feature>
<feature type="binding site" evidence="3">
    <location>
        <position position="508"/>
    </location>
    <ligand>
        <name>Zn(2+)</name>
        <dbReference type="ChEBI" id="CHEBI:29105"/>
        <label>1</label>
    </ligand>
</feature>
<feature type="binding site" evidence="3">
    <location>
        <position position="512"/>
    </location>
    <ligand>
        <name>Zn(2+)</name>
        <dbReference type="ChEBI" id="CHEBI:29105"/>
        <label>1</label>
    </ligand>
</feature>
<feature type="binding site" evidence="3">
    <location>
        <position position="520"/>
    </location>
    <ligand>
        <name>Zn(2+)</name>
        <dbReference type="ChEBI" id="CHEBI:29105"/>
        <label>2</label>
    </ligand>
</feature>
<feature type="binding site" evidence="3">
    <location>
        <position position="524"/>
    </location>
    <ligand>
        <name>Zn(2+)</name>
        <dbReference type="ChEBI" id="CHEBI:29105"/>
        <label>2</label>
    </ligand>
</feature>
<feature type="modified residue" description="Phosphoserine" evidence="2">
    <location>
        <position position="14"/>
    </location>
</feature>
<feature type="modified residue" description="Phosphoserine" evidence="2">
    <location>
        <position position="390"/>
    </location>
</feature>
<sequence>MPDRTEKHSTMPDSPVDVKTQSRLTPPAMPPPPTTQGAPRTSSFTPTTLTNGTSHSPTALNGAPSPPNGFSNGPSSSSSSSLANQQLPPACGARQLSKLKRFLTTLQQFGNDISPEIGERVRTLVLGLVNSTLTIEEFHSKLQEATNFPLRPFVIPFLKANLPLLQRELLHCARLAKQNPAQYLAQHEQLLLDASTTSPVDSSELLLDVNENGKRRTPDRTKENGFDREPLHSEHPSKRPCTISPGQRYSPNNGLSYQPNGLPHPTPPPPQHYRLDDMAIAHHYRDSYRHPSHRDLRDRNRPMGLHGTRQEEMIDHRLTDREWAEEWKHLDHLLNCIMDMVEKTRRSLTVLRRCQEADREELNYWIRRYSDAEDLKKGGSSSSSHSRQQSPVNPDPVALDAHREFLHRPASGYVPEEIWKKAEEAVNEVKRQAMTELQKAVSEAERKAHDMITTERAKMERTVAEAKRQAAEDALAVINQQEDSSESCWNCGRKASETCSGCNTARYCGSFCQHKDWEKHHHICGQTLQAPQQGDTPAVSSSVTPSSGAGSPMDTPPAATPRSTTPGTPSTIETTPR</sequence>
<protein>
    <recommendedName>
        <fullName>Protein CBFA2T1</fullName>
    </recommendedName>
    <alternativeName>
        <fullName>Protein MTG8</fullName>
    </alternativeName>
</protein>
<accession>Q61909</accession>
<comment type="function">
    <text evidence="2 6">Transcriptional corepressor which facilitates transcriptional repression via its association with DNA-binding transcription factors and recruitment of other corepressors and histone-modifying enzymes. Can repress the expression of MMP7 in a ZBTB33-dependent manner. Can repress transactivation mediated by TCF12 (By similarity). Acts as a negative regulator of adipogenesis (PubMed:23527555).</text>
</comment>
<comment type="subunit">
    <text evidence="2">Homotetramer (By similarity). Heterotetramer with CBFA2T2 and CBFA2T3 (By similarity). Interacts with TCF12, SIN3A, HDAC1, HDAC2, HDAC3, NCOR1 and NCOR2. Interacts with ATN1 (via its N-terminus); the interaction enhances the transcriptional repression (By similarity).</text>
</comment>
<comment type="subcellular location">
    <subcellularLocation>
        <location evidence="4">Nucleus</location>
    </subcellularLocation>
    <text evidence="1">Colocalizes with ATN1 in discrete nuclear dots.</text>
</comment>
<comment type="domain">
    <text evidence="2">The TAFH domain mediates interaction with transcription regulators.</text>
</comment>
<comment type="domain">
    <text evidence="2">Nervy homology region 2 (NHR2) mediates homo- and possibly heterotypic oligomerization by forming a four-helix bundle tetrameric structure.</text>
</comment>
<comment type="similarity">
    <text evidence="7">Belongs to the CBFA2T family.</text>
</comment>
<gene>
    <name type="primary">Runx1t1</name>
    <name type="synonym">Cbfa2t1</name>
    <name type="synonym">Cbfa2t1h</name>
    <name type="synonym">Mtg8</name>
</gene>
<reference key="1">
    <citation type="journal article" date="1995" name="Genomics">
        <title>Cloning and gene mapping of the mouse homologue of the CBFA2T1 gene associated with human acute myeloid leukemia.</title>
        <authorList>
            <person name="Niwa-Kawakita M."/>
            <person name="Miyoshi H."/>
            <person name="Gotoh O."/>
            <person name="Matsushima Y."/>
            <person name="Nishimura M."/>
            <person name="Shisa H."/>
            <person name="Ohki M."/>
        </authorList>
    </citation>
    <scope>NUCLEOTIDE SEQUENCE [MRNA]</scope>
    <source>
        <strain>ICR</strain>
        <tissue>Brain</tissue>
    </source>
</reference>
<reference key="2">
    <citation type="journal article" date="2013" name="FEBS J.">
        <title>Gdf6 induces commitment of pluripotent mesenchymal C3H10T1/2 cells to the adipocyte lineage.</title>
        <authorList>
            <person name="Wang S.S."/>
            <person name="Huang H.Y."/>
            <person name="Chen S.Z."/>
            <person name="Li X."/>
            <person name="Zhang W.T."/>
            <person name="Tang Q.Q."/>
        </authorList>
    </citation>
    <scope>FUNCTION</scope>
</reference>
<organism>
    <name type="scientific">Mus musculus</name>
    <name type="common">Mouse</name>
    <dbReference type="NCBI Taxonomy" id="10090"/>
    <lineage>
        <taxon>Eukaryota</taxon>
        <taxon>Metazoa</taxon>
        <taxon>Chordata</taxon>
        <taxon>Craniata</taxon>
        <taxon>Vertebrata</taxon>
        <taxon>Euteleostomi</taxon>
        <taxon>Mammalia</taxon>
        <taxon>Eutheria</taxon>
        <taxon>Euarchontoglires</taxon>
        <taxon>Glires</taxon>
        <taxon>Rodentia</taxon>
        <taxon>Myomorpha</taxon>
        <taxon>Muroidea</taxon>
        <taxon>Muridae</taxon>
        <taxon>Murinae</taxon>
        <taxon>Mus</taxon>
        <taxon>Mus</taxon>
    </lineage>
</organism>
<name>MTG8_MOUSE</name>
<evidence type="ECO:0000250" key="1"/>
<evidence type="ECO:0000250" key="2">
    <source>
        <dbReference type="UniProtKB" id="Q06455"/>
    </source>
</evidence>
<evidence type="ECO:0000255" key="3">
    <source>
        <dbReference type="PROSITE-ProRule" id="PRU00134"/>
    </source>
</evidence>
<evidence type="ECO:0000255" key="4">
    <source>
        <dbReference type="PROSITE-ProRule" id="PRU00440"/>
    </source>
</evidence>
<evidence type="ECO:0000256" key="5">
    <source>
        <dbReference type="SAM" id="MobiDB-lite"/>
    </source>
</evidence>
<evidence type="ECO:0000269" key="6">
    <source>
    </source>
</evidence>
<evidence type="ECO:0000305" key="7"/>